<comment type="function">
    <text evidence="1">Involved in the binding of tRNA to the ribosomes.</text>
</comment>
<comment type="subunit">
    <text evidence="1">Part of the 30S ribosomal subunit.</text>
</comment>
<comment type="similarity">
    <text evidence="1">Belongs to the universal ribosomal protein uS10 family.</text>
</comment>
<proteinExistence type="inferred from homology"/>
<accession>Q250N3</accession>
<gene>
    <name evidence="1" type="primary">rpsJ</name>
    <name type="ordered locus">DSY0470</name>
</gene>
<sequence length="102" mass="11621">MSSQKIRIRLKAFDHKTLDQSAEKIVETAKRTGARVSGPIPLPTEKSIYTILRSPHVNKDSREQFEMRTHKRLIDILEPTSKTVDALMRLDLPAGVDIEIKL</sequence>
<keyword id="KW-1185">Reference proteome</keyword>
<keyword id="KW-0687">Ribonucleoprotein</keyword>
<keyword id="KW-0689">Ribosomal protein</keyword>
<feature type="chain" id="PRO_0000258547" description="Small ribosomal subunit protein uS10">
    <location>
        <begin position="1"/>
        <end position="102"/>
    </location>
</feature>
<protein>
    <recommendedName>
        <fullName evidence="1">Small ribosomal subunit protein uS10</fullName>
    </recommendedName>
    <alternativeName>
        <fullName evidence="2">30S ribosomal protein S10</fullName>
    </alternativeName>
</protein>
<reference key="1">
    <citation type="journal article" date="2006" name="J. Bacteriol.">
        <title>Complete genome sequence of the dehalorespiring bacterium Desulfitobacterium hafniense Y51 and comparison with Dehalococcoides ethenogenes 195.</title>
        <authorList>
            <person name="Nonaka H."/>
            <person name="Keresztes G."/>
            <person name="Shinoda Y."/>
            <person name="Ikenaga Y."/>
            <person name="Abe M."/>
            <person name="Naito K."/>
            <person name="Inatomi K."/>
            <person name="Furukawa K."/>
            <person name="Inui M."/>
            <person name="Yukawa H."/>
        </authorList>
    </citation>
    <scope>NUCLEOTIDE SEQUENCE [LARGE SCALE GENOMIC DNA]</scope>
    <source>
        <strain>Y51</strain>
    </source>
</reference>
<dbReference type="EMBL" id="AP008230">
    <property type="protein sequence ID" value="BAE82259.1"/>
    <property type="molecule type" value="Genomic_DNA"/>
</dbReference>
<dbReference type="RefSeq" id="WP_005810163.1">
    <property type="nucleotide sequence ID" value="NC_007907.1"/>
</dbReference>
<dbReference type="SMR" id="Q250N3"/>
<dbReference type="STRING" id="138119.DSY0470"/>
<dbReference type="KEGG" id="dsy:DSY0470"/>
<dbReference type="eggNOG" id="COG0051">
    <property type="taxonomic scope" value="Bacteria"/>
</dbReference>
<dbReference type="HOGENOM" id="CLU_122625_1_3_9"/>
<dbReference type="Proteomes" id="UP000001946">
    <property type="component" value="Chromosome"/>
</dbReference>
<dbReference type="GO" id="GO:1990904">
    <property type="term" value="C:ribonucleoprotein complex"/>
    <property type="evidence" value="ECO:0007669"/>
    <property type="project" value="UniProtKB-KW"/>
</dbReference>
<dbReference type="GO" id="GO:0005840">
    <property type="term" value="C:ribosome"/>
    <property type="evidence" value="ECO:0007669"/>
    <property type="project" value="UniProtKB-KW"/>
</dbReference>
<dbReference type="GO" id="GO:0003735">
    <property type="term" value="F:structural constituent of ribosome"/>
    <property type="evidence" value="ECO:0007669"/>
    <property type="project" value="InterPro"/>
</dbReference>
<dbReference type="GO" id="GO:0000049">
    <property type="term" value="F:tRNA binding"/>
    <property type="evidence" value="ECO:0007669"/>
    <property type="project" value="UniProtKB-UniRule"/>
</dbReference>
<dbReference type="GO" id="GO:0006412">
    <property type="term" value="P:translation"/>
    <property type="evidence" value="ECO:0007669"/>
    <property type="project" value="UniProtKB-UniRule"/>
</dbReference>
<dbReference type="FunFam" id="3.30.70.600:FF:000001">
    <property type="entry name" value="30S ribosomal protein S10"/>
    <property type="match status" value="1"/>
</dbReference>
<dbReference type="Gene3D" id="3.30.70.600">
    <property type="entry name" value="Ribosomal protein S10 domain"/>
    <property type="match status" value="1"/>
</dbReference>
<dbReference type="HAMAP" id="MF_00508">
    <property type="entry name" value="Ribosomal_uS10"/>
    <property type="match status" value="1"/>
</dbReference>
<dbReference type="InterPro" id="IPR001848">
    <property type="entry name" value="Ribosomal_uS10"/>
</dbReference>
<dbReference type="InterPro" id="IPR018268">
    <property type="entry name" value="Ribosomal_uS10_CS"/>
</dbReference>
<dbReference type="InterPro" id="IPR027486">
    <property type="entry name" value="Ribosomal_uS10_dom"/>
</dbReference>
<dbReference type="InterPro" id="IPR036838">
    <property type="entry name" value="Ribosomal_uS10_dom_sf"/>
</dbReference>
<dbReference type="NCBIfam" id="NF001861">
    <property type="entry name" value="PRK00596.1"/>
    <property type="match status" value="1"/>
</dbReference>
<dbReference type="NCBIfam" id="TIGR01049">
    <property type="entry name" value="rpsJ_bact"/>
    <property type="match status" value="1"/>
</dbReference>
<dbReference type="PANTHER" id="PTHR11700">
    <property type="entry name" value="30S RIBOSOMAL PROTEIN S10 FAMILY MEMBER"/>
    <property type="match status" value="1"/>
</dbReference>
<dbReference type="Pfam" id="PF00338">
    <property type="entry name" value="Ribosomal_S10"/>
    <property type="match status" value="1"/>
</dbReference>
<dbReference type="PRINTS" id="PR00971">
    <property type="entry name" value="RIBOSOMALS10"/>
</dbReference>
<dbReference type="SMART" id="SM01403">
    <property type="entry name" value="Ribosomal_S10"/>
    <property type="match status" value="1"/>
</dbReference>
<dbReference type="SUPFAM" id="SSF54999">
    <property type="entry name" value="Ribosomal protein S10"/>
    <property type="match status" value="1"/>
</dbReference>
<dbReference type="PROSITE" id="PS00361">
    <property type="entry name" value="RIBOSOMAL_S10"/>
    <property type="match status" value="1"/>
</dbReference>
<name>RS10_DESHY</name>
<organism>
    <name type="scientific">Desulfitobacterium hafniense (strain Y51)</name>
    <dbReference type="NCBI Taxonomy" id="138119"/>
    <lineage>
        <taxon>Bacteria</taxon>
        <taxon>Bacillati</taxon>
        <taxon>Bacillota</taxon>
        <taxon>Clostridia</taxon>
        <taxon>Eubacteriales</taxon>
        <taxon>Desulfitobacteriaceae</taxon>
        <taxon>Desulfitobacterium</taxon>
    </lineage>
</organism>
<evidence type="ECO:0000255" key="1">
    <source>
        <dbReference type="HAMAP-Rule" id="MF_00508"/>
    </source>
</evidence>
<evidence type="ECO:0000305" key="2"/>